<dbReference type="EMBL" id="CP000891">
    <property type="protein sequence ID" value="ABX48801.1"/>
    <property type="molecule type" value="Genomic_DNA"/>
</dbReference>
<dbReference type="RefSeq" id="WP_006081125.1">
    <property type="nucleotide sequence ID" value="NC_009997.1"/>
</dbReference>
<dbReference type="SMR" id="A9KWH8"/>
<dbReference type="GeneID" id="11771863"/>
<dbReference type="KEGG" id="sbn:Sbal195_1628"/>
<dbReference type="HOGENOM" id="CLU_014218_8_2_6"/>
<dbReference type="Proteomes" id="UP000000770">
    <property type="component" value="Chromosome"/>
</dbReference>
<dbReference type="GO" id="GO:0009376">
    <property type="term" value="C:HslUV protease complex"/>
    <property type="evidence" value="ECO:0007669"/>
    <property type="project" value="TreeGrafter"/>
</dbReference>
<dbReference type="GO" id="GO:0005524">
    <property type="term" value="F:ATP binding"/>
    <property type="evidence" value="ECO:0007669"/>
    <property type="project" value="UniProtKB-UniRule"/>
</dbReference>
<dbReference type="GO" id="GO:0016887">
    <property type="term" value="F:ATP hydrolysis activity"/>
    <property type="evidence" value="ECO:0007669"/>
    <property type="project" value="InterPro"/>
</dbReference>
<dbReference type="GO" id="GO:0140662">
    <property type="term" value="F:ATP-dependent protein folding chaperone"/>
    <property type="evidence" value="ECO:0007669"/>
    <property type="project" value="InterPro"/>
</dbReference>
<dbReference type="GO" id="GO:0046983">
    <property type="term" value="F:protein dimerization activity"/>
    <property type="evidence" value="ECO:0007669"/>
    <property type="project" value="InterPro"/>
</dbReference>
<dbReference type="GO" id="GO:0051082">
    <property type="term" value="F:unfolded protein binding"/>
    <property type="evidence" value="ECO:0007669"/>
    <property type="project" value="UniProtKB-UniRule"/>
</dbReference>
<dbReference type="GO" id="GO:0008270">
    <property type="term" value="F:zinc ion binding"/>
    <property type="evidence" value="ECO:0007669"/>
    <property type="project" value="InterPro"/>
</dbReference>
<dbReference type="GO" id="GO:0051301">
    <property type="term" value="P:cell division"/>
    <property type="evidence" value="ECO:0007669"/>
    <property type="project" value="TreeGrafter"/>
</dbReference>
<dbReference type="GO" id="GO:0051603">
    <property type="term" value="P:proteolysis involved in protein catabolic process"/>
    <property type="evidence" value="ECO:0007669"/>
    <property type="project" value="TreeGrafter"/>
</dbReference>
<dbReference type="CDD" id="cd19497">
    <property type="entry name" value="RecA-like_ClpX"/>
    <property type="match status" value="1"/>
</dbReference>
<dbReference type="FunFam" id="1.10.8.60:FF:000002">
    <property type="entry name" value="ATP-dependent Clp protease ATP-binding subunit ClpX"/>
    <property type="match status" value="1"/>
</dbReference>
<dbReference type="FunFam" id="3.40.50.300:FF:000005">
    <property type="entry name" value="ATP-dependent Clp protease ATP-binding subunit ClpX"/>
    <property type="match status" value="1"/>
</dbReference>
<dbReference type="Gene3D" id="1.10.8.60">
    <property type="match status" value="1"/>
</dbReference>
<dbReference type="Gene3D" id="6.20.220.10">
    <property type="entry name" value="ClpX chaperone, C4-type zinc finger domain"/>
    <property type="match status" value="1"/>
</dbReference>
<dbReference type="Gene3D" id="3.40.50.300">
    <property type="entry name" value="P-loop containing nucleotide triphosphate hydrolases"/>
    <property type="match status" value="1"/>
</dbReference>
<dbReference type="HAMAP" id="MF_00175">
    <property type="entry name" value="ClpX"/>
    <property type="match status" value="1"/>
</dbReference>
<dbReference type="InterPro" id="IPR003593">
    <property type="entry name" value="AAA+_ATPase"/>
</dbReference>
<dbReference type="InterPro" id="IPR050052">
    <property type="entry name" value="ATP-dep_Clp_protease_ClpX"/>
</dbReference>
<dbReference type="InterPro" id="IPR003959">
    <property type="entry name" value="ATPase_AAA_core"/>
</dbReference>
<dbReference type="InterPro" id="IPR019489">
    <property type="entry name" value="Clp_ATPase_C"/>
</dbReference>
<dbReference type="InterPro" id="IPR004487">
    <property type="entry name" value="Clp_protease_ATP-bd_su_ClpX"/>
</dbReference>
<dbReference type="InterPro" id="IPR046425">
    <property type="entry name" value="ClpX_bact"/>
</dbReference>
<dbReference type="InterPro" id="IPR027417">
    <property type="entry name" value="P-loop_NTPase"/>
</dbReference>
<dbReference type="InterPro" id="IPR010603">
    <property type="entry name" value="Znf_CppX_C4"/>
</dbReference>
<dbReference type="InterPro" id="IPR038366">
    <property type="entry name" value="Znf_CppX_C4_sf"/>
</dbReference>
<dbReference type="NCBIfam" id="TIGR00382">
    <property type="entry name" value="clpX"/>
    <property type="match status" value="1"/>
</dbReference>
<dbReference type="NCBIfam" id="NF003745">
    <property type="entry name" value="PRK05342.1"/>
    <property type="match status" value="1"/>
</dbReference>
<dbReference type="PANTHER" id="PTHR48102:SF7">
    <property type="entry name" value="ATP-DEPENDENT CLP PROTEASE ATP-BINDING SUBUNIT CLPX-LIKE, MITOCHONDRIAL"/>
    <property type="match status" value="1"/>
</dbReference>
<dbReference type="PANTHER" id="PTHR48102">
    <property type="entry name" value="ATP-DEPENDENT CLP PROTEASE ATP-BINDING SUBUNIT CLPX-LIKE, MITOCHONDRIAL-RELATED"/>
    <property type="match status" value="1"/>
</dbReference>
<dbReference type="Pfam" id="PF07724">
    <property type="entry name" value="AAA_2"/>
    <property type="match status" value="1"/>
</dbReference>
<dbReference type="Pfam" id="PF10431">
    <property type="entry name" value="ClpB_D2-small"/>
    <property type="match status" value="1"/>
</dbReference>
<dbReference type="Pfam" id="PF06689">
    <property type="entry name" value="zf-C4_ClpX"/>
    <property type="match status" value="1"/>
</dbReference>
<dbReference type="SMART" id="SM00382">
    <property type="entry name" value="AAA"/>
    <property type="match status" value="1"/>
</dbReference>
<dbReference type="SMART" id="SM01086">
    <property type="entry name" value="ClpB_D2-small"/>
    <property type="match status" value="1"/>
</dbReference>
<dbReference type="SMART" id="SM00994">
    <property type="entry name" value="zf-C4_ClpX"/>
    <property type="match status" value="1"/>
</dbReference>
<dbReference type="SUPFAM" id="SSF57716">
    <property type="entry name" value="Glucocorticoid receptor-like (DNA-binding domain)"/>
    <property type="match status" value="1"/>
</dbReference>
<dbReference type="SUPFAM" id="SSF52540">
    <property type="entry name" value="P-loop containing nucleoside triphosphate hydrolases"/>
    <property type="match status" value="1"/>
</dbReference>
<dbReference type="PROSITE" id="PS51902">
    <property type="entry name" value="CLPX_ZB"/>
    <property type="match status" value="1"/>
</dbReference>
<proteinExistence type="inferred from homology"/>
<comment type="function">
    <text evidence="1">ATP-dependent specificity component of the Clp protease. It directs the protease to specific substrates. Can perform chaperone functions in the absence of ClpP.</text>
</comment>
<comment type="subunit">
    <text evidence="1">Component of the ClpX-ClpP complex. Forms a hexameric ring that, in the presence of ATP, binds to fourteen ClpP subunits assembled into a disk-like structure with a central cavity, resembling the structure of eukaryotic proteasomes.</text>
</comment>
<comment type="similarity">
    <text evidence="1">Belongs to the ClpX chaperone family.</text>
</comment>
<organism>
    <name type="scientific">Shewanella baltica (strain OS195)</name>
    <dbReference type="NCBI Taxonomy" id="399599"/>
    <lineage>
        <taxon>Bacteria</taxon>
        <taxon>Pseudomonadati</taxon>
        <taxon>Pseudomonadota</taxon>
        <taxon>Gammaproteobacteria</taxon>
        <taxon>Alteromonadales</taxon>
        <taxon>Shewanellaceae</taxon>
        <taxon>Shewanella</taxon>
    </lineage>
</organism>
<reference key="1">
    <citation type="submission" date="2007-11" db="EMBL/GenBank/DDBJ databases">
        <title>Complete sequence of chromosome of Shewanella baltica OS195.</title>
        <authorList>
            <consortium name="US DOE Joint Genome Institute"/>
            <person name="Copeland A."/>
            <person name="Lucas S."/>
            <person name="Lapidus A."/>
            <person name="Barry K."/>
            <person name="Glavina del Rio T."/>
            <person name="Dalin E."/>
            <person name="Tice H."/>
            <person name="Pitluck S."/>
            <person name="Chain P."/>
            <person name="Malfatti S."/>
            <person name="Shin M."/>
            <person name="Vergez L."/>
            <person name="Schmutz J."/>
            <person name="Larimer F."/>
            <person name="Land M."/>
            <person name="Hauser L."/>
            <person name="Kyrpides N."/>
            <person name="Kim E."/>
            <person name="Brettar I."/>
            <person name="Rodrigues J."/>
            <person name="Konstantinidis K."/>
            <person name="Klappenbach J."/>
            <person name="Hofle M."/>
            <person name="Tiedje J."/>
            <person name="Richardson P."/>
        </authorList>
    </citation>
    <scope>NUCLEOTIDE SEQUENCE [LARGE SCALE GENOMIC DNA]</scope>
    <source>
        <strain>OS195</strain>
    </source>
</reference>
<gene>
    <name evidence="1" type="primary">clpX</name>
    <name type="ordered locus">Sbal195_1628</name>
</gene>
<accession>A9KWH8</accession>
<feature type="chain" id="PRO_1000077175" description="ATP-dependent Clp protease ATP-binding subunit ClpX">
    <location>
        <begin position="1"/>
        <end position="426"/>
    </location>
</feature>
<feature type="domain" description="ClpX-type ZB" evidence="2">
    <location>
        <begin position="4"/>
        <end position="57"/>
    </location>
</feature>
<feature type="binding site" evidence="2">
    <location>
        <position position="16"/>
    </location>
    <ligand>
        <name>Zn(2+)</name>
        <dbReference type="ChEBI" id="CHEBI:29105"/>
    </ligand>
</feature>
<feature type="binding site" evidence="2">
    <location>
        <position position="19"/>
    </location>
    <ligand>
        <name>Zn(2+)</name>
        <dbReference type="ChEBI" id="CHEBI:29105"/>
    </ligand>
</feature>
<feature type="binding site" evidence="2">
    <location>
        <position position="38"/>
    </location>
    <ligand>
        <name>Zn(2+)</name>
        <dbReference type="ChEBI" id="CHEBI:29105"/>
    </ligand>
</feature>
<feature type="binding site" evidence="2">
    <location>
        <position position="41"/>
    </location>
    <ligand>
        <name>Zn(2+)</name>
        <dbReference type="ChEBI" id="CHEBI:29105"/>
    </ligand>
</feature>
<feature type="binding site" evidence="1">
    <location>
        <begin position="121"/>
        <end position="128"/>
    </location>
    <ligand>
        <name>ATP</name>
        <dbReference type="ChEBI" id="CHEBI:30616"/>
    </ligand>
</feature>
<protein>
    <recommendedName>
        <fullName evidence="1">ATP-dependent Clp protease ATP-binding subunit ClpX</fullName>
    </recommendedName>
</protein>
<sequence length="426" mass="46431">MGDNKNNGDSGKLLYCSFCGKSQHEVRKLIAGPSVYVCDECVELCNDIIREEIKEISPKRDSDKLPTPHELRAHLDDYVIGQDRAKKVLSVAVYNHYKRLKNASPKDGIELGKSNILLIGPTGSGKTLLAETLARSLNVPFTMADATTLTEAGYVGEDVENIIQKLLQKCDYDVEKAQRGIVYIDEIDKISRKSDNPSITRDVSGEGVQQALLKLIEGTVAAVPPQGGRKHPQQEFLQVDTSKILFICGGAFAGLEKVIEQRAHVGSGIGFGAQVKGEKEKATISETLTQVEPGDLVKYGLIPEFIGRLPVVATLTELDEEALVQILSQPKNALTKQYSALFEMEGVELEFREDALKAIAHKAMSRKTGARGLRSIVESILLDTMYDIPSVDGVVKAVVDESVVKGESAPILIYEHNEAQAASGEQ</sequence>
<evidence type="ECO:0000255" key="1">
    <source>
        <dbReference type="HAMAP-Rule" id="MF_00175"/>
    </source>
</evidence>
<evidence type="ECO:0000255" key="2">
    <source>
        <dbReference type="PROSITE-ProRule" id="PRU01250"/>
    </source>
</evidence>
<keyword id="KW-0067">ATP-binding</keyword>
<keyword id="KW-0143">Chaperone</keyword>
<keyword id="KW-0479">Metal-binding</keyword>
<keyword id="KW-0547">Nucleotide-binding</keyword>
<keyword id="KW-0862">Zinc</keyword>
<name>CLPX_SHEB9</name>